<evidence type="ECO:0000255" key="1">
    <source>
        <dbReference type="HAMAP-Rule" id="MF_00351"/>
    </source>
</evidence>
<sequence length="222" mass="25693">MSKGDRPGLLLPFENKRIIRIRNSVYTETETPQRVYGEEITKINNRTYREWDPRRSKPAAAILNGLRRFPIRENDSVLYLGASTGTTISHISDICPAGTIYGVEVSYEPFSKLLDLAKKRNNLYPILEDANSPEKYSFFIEHVDVMYQDISQRNQIQIFKNNVNTFNPKRGFLVLKIRSVKSTEDSRSILNTAMDQLSVYHLKEVINLKPYDTDHYLITLDT</sequence>
<feature type="chain" id="PRO_0000148552" description="Fibrillarin-like rRNA/tRNA 2'-O-methyltransferase">
    <location>
        <begin position="1"/>
        <end position="222"/>
    </location>
</feature>
<feature type="binding site" evidence="1">
    <location>
        <begin position="86"/>
        <end position="87"/>
    </location>
    <ligand>
        <name>S-adenosyl-L-methionine</name>
        <dbReference type="ChEBI" id="CHEBI:59789"/>
    </ligand>
</feature>
<feature type="binding site" evidence="1">
    <location>
        <begin position="104"/>
        <end position="105"/>
    </location>
    <ligand>
        <name>S-adenosyl-L-methionine</name>
        <dbReference type="ChEBI" id="CHEBI:59789"/>
    </ligand>
</feature>
<feature type="binding site" evidence="1">
    <location>
        <begin position="129"/>
        <end position="130"/>
    </location>
    <ligand>
        <name>S-adenosyl-L-methionine</name>
        <dbReference type="ChEBI" id="CHEBI:59789"/>
    </ligand>
</feature>
<feature type="binding site" evidence="1">
    <location>
        <begin position="149"/>
        <end position="152"/>
    </location>
    <ligand>
        <name>S-adenosyl-L-methionine</name>
        <dbReference type="ChEBI" id="CHEBI:59789"/>
    </ligand>
</feature>
<gene>
    <name evidence="1" type="primary">flpA</name>
    <name type="ordered locus">TV1118</name>
    <name type="ORF">TVG1150205</name>
</gene>
<reference key="1">
    <citation type="journal article" date="2000" name="Proc. Natl. Acad. Sci. U.S.A.">
        <title>Archaeal adaptation to higher temperatures revealed by genomic sequence of Thermoplasma volcanium.</title>
        <authorList>
            <person name="Kawashima T."/>
            <person name="Amano N."/>
            <person name="Koike H."/>
            <person name="Makino S."/>
            <person name="Higuchi S."/>
            <person name="Kawashima-Ohya Y."/>
            <person name="Watanabe K."/>
            <person name="Yamazaki M."/>
            <person name="Kanehori K."/>
            <person name="Kawamoto T."/>
            <person name="Nunoshiba T."/>
            <person name="Yamamoto Y."/>
            <person name="Aramaki H."/>
            <person name="Makino K."/>
            <person name="Suzuki M."/>
        </authorList>
    </citation>
    <scope>NUCLEOTIDE SEQUENCE [LARGE SCALE GENOMIC DNA]</scope>
    <source>
        <strain>ATCC 51530 / DSM 4299 / JCM 9571 / NBRC 15438 / GSS1</strain>
    </source>
</reference>
<protein>
    <recommendedName>
        <fullName evidence="1">Fibrillarin-like rRNA/tRNA 2'-O-methyltransferase</fullName>
        <ecNumber evidence="1">2.1.1.-</ecNumber>
    </recommendedName>
</protein>
<accession>Q979P2</accession>
<organism>
    <name type="scientific">Thermoplasma volcanium (strain ATCC 51530 / DSM 4299 / JCM 9571 / NBRC 15438 / GSS1)</name>
    <dbReference type="NCBI Taxonomy" id="273116"/>
    <lineage>
        <taxon>Archaea</taxon>
        <taxon>Methanobacteriati</taxon>
        <taxon>Thermoplasmatota</taxon>
        <taxon>Thermoplasmata</taxon>
        <taxon>Thermoplasmatales</taxon>
        <taxon>Thermoplasmataceae</taxon>
        <taxon>Thermoplasma</taxon>
    </lineage>
</organism>
<proteinExistence type="inferred from homology"/>
<comment type="function">
    <text evidence="1">Involved in pre-rRNA and tRNA processing. Utilizes the methyl donor S-adenosyl-L-methionine to catalyze the site-specific 2'-hydroxyl methylation of ribose moieties in rRNA and tRNA. Site specificity is provided by a guide RNA that base pairs with the substrate. Methylation occurs at a characteristic distance from the sequence involved in base pairing with the guide RNA.</text>
</comment>
<comment type="subunit">
    <text evidence="1">Interacts with nop5. Component of box C/D small ribonucleoprotein (sRNP) particles that contain rpl7ae, FlpA and nop5, plus a guide RNA.</text>
</comment>
<comment type="similarity">
    <text evidence="1">Belongs to the methyltransferase superfamily. Fibrillarin family.</text>
</comment>
<keyword id="KW-0489">Methyltransferase</keyword>
<keyword id="KW-0694">RNA-binding</keyword>
<keyword id="KW-0698">rRNA processing</keyword>
<keyword id="KW-0808">Transferase</keyword>
<keyword id="KW-0819">tRNA processing</keyword>
<name>FLPA_THEVO</name>
<dbReference type="EC" id="2.1.1.-" evidence="1"/>
<dbReference type="EMBL" id="BA000011">
    <property type="protein sequence ID" value="BAB60260.1"/>
    <property type="molecule type" value="Genomic_DNA"/>
</dbReference>
<dbReference type="RefSeq" id="WP_010917352.1">
    <property type="nucleotide sequence ID" value="NC_002689.2"/>
</dbReference>
<dbReference type="SMR" id="Q979P2"/>
<dbReference type="STRING" id="273116.gene:9381917"/>
<dbReference type="PaxDb" id="273116-14325356"/>
<dbReference type="GeneID" id="1441234"/>
<dbReference type="KEGG" id="tvo:TVG1150205"/>
<dbReference type="eggNOG" id="arCOG00078">
    <property type="taxonomic scope" value="Archaea"/>
</dbReference>
<dbReference type="HOGENOM" id="CLU_059055_2_0_2"/>
<dbReference type="OrthoDB" id="6244at2157"/>
<dbReference type="PhylomeDB" id="Q979P2"/>
<dbReference type="Proteomes" id="UP000001017">
    <property type="component" value="Chromosome"/>
</dbReference>
<dbReference type="GO" id="GO:1990259">
    <property type="term" value="F:histone H2AQ104 methyltransferase activity"/>
    <property type="evidence" value="ECO:0007669"/>
    <property type="project" value="TreeGrafter"/>
</dbReference>
<dbReference type="GO" id="GO:0003723">
    <property type="term" value="F:RNA binding"/>
    <property type="evidence" value="ECO:0007669"/>
    <property type="project" value="UniProtKB-UniRule"/>
</dbReference>
<dbReference type="GO" id="GO:0008649">
    <property type="term" value="F:rRNA methyltransferase activity"/>
    <property type="evidence" value="ECO:0007669"/>
    <property type="project" value="TreeGrafter"/>
</dbReference>
<dbReference type="GO" id="GO:0000494">
    <property type="term" value="P:box C/D sno(s)RNA 3'-end processing"/>
    <property type="evidence" value="ECO:0007669"/>
    <property type="project" value="TreeGrafter"/>
</dbReference>
<dbReference type="GO" id="GO:0008033">
    <property type="term" value="P:tRNA processing"/>
    <property type="evidence" value="ECO:0007669"/>
    <property type="project" value="UniProtKB-UniRule"/>
</dbReference>
<dbReference type="Gene3D" id="3.40.50.150">
    <property type="entry name" value="Vaccinia Virus protein VP39"/>
    <property type="match status" value="1"/>
</dbReference>
<dbReference type="HAMAP" id="MF_00351">
    <property type="entry name" value="RNA_methyltransf_FlpA"/>
    <property type="match status" value="1"/>
</dbReference>
<dbReference type="InterPro" id="IPR000692">
    <property type="entry name" value="Fibrillarin"/>
</dbReference>
<dbReference type="InterPro" id="IPR029063">
    <property type="entry name" value="SAM-dependent_MTases_sf"/>
</dbReference>
<dbReference type="NCBIfam" id="NF003276">
    <property type="entry name" value="PRK04266.1-2"/>
    <property type="match status" value="1"/>
</dbReference>
<dbReference type="PANTHER" id="PTHR10335:SF17">
    <property type="entry name" value="FIBRILLARIN"/>
    <property type="match status" value="1"/>
</dbReference>
<dbReference type="PANTHER" id="PTHR10335">
    <property type="entry name" value="RRNA 2-O-METHYLTRANSFERASE FIBRILLARIN"/>
    <property type="match status" value="1"/>
</dbReference>
<dbReference type="Pfam" id="PF01269">
    <property type="entry name" value="Fibrillarin"/>
    <property type="match status" value="1"/>
</dbReference>
<dbReference type="PIRSF" id="PIRSF006540">
    <property type="entry name" value="Nop17p"/>
    <property type="match status" value="1"/>
</dbReference>
<dbReference type="PRINTS" id="PR00052">
    <property type="entry name" value="FIBRILLARIN"/>
</dbReference>
<dbReference type="SMART" id="SM01206">
    <property type="entry name" value="Fibrillarin"/>
    <property type="match status" value="1"/>
</dbReference>
<dbReference type="SUPFAM" id="SSF53335">
    <property type="entry name" value="S-adenosyl-L-methionine-dependent methyltransferases"/>
    <property type="match status" value="1"/>
</dbReference>